<keyword id="KW-0010">Activator</keyword>
<keyword id="KW-0963">Cytoplasm</keyword>
<keyword id="KW-0238">DNA-binding</keyword>
<keyword id="KW-1185">Reference proteome</keyword>
<keyword id="KW-0678">Repressor</keyword>
<keyword id="KW-0804">Transcription</keyword>
<keyword id="KW-0805">Transcription regulation</keyword>
<dbReference type="EMBL" id="AE005174">
    <property type="protein sequence ID" value="AAG57922.1"/>
    <property type="molecule type" value="Genomic_DNA"/>
</dbReference>
<dbReference type="EMBL" id="BA000007">
    <property type="protein sequence ID" value="BAB37091.1"/>
    <property type="molecule type" value="Genomic_DNA"/>
</dbReference>
<dbReference type="PIR" id="D91087">
    <property type="entry name" value="D91087"/>
</dbReference>
<dbReference type="PIR" id="F85932">
    <property type="entry name" value="F85932"/>
</dbReference>
<dbReference type="RefSeq" id="NP_311695.1">
    <property type="nucleotide sequence ID" value="NC_002695.1"/>
</dbReference>
<dbReference type="RefSeq" id="WP_000044401.1">
    <property type="nucleotide sequence ID" value="NZ_VOAI01000003.1"/>
</dbReference>
<dbReference type="SMR" id="P0A9F8"/>
<dbReference type="STRING" id="155864.Z4125"/>
<dbReference type="GeneID" id="916524"/>
<dbReference type="GeneID" id="93779190"/>
<dbReference type="KEGG" id="ece:Z4125"/>
<dbReference type="KEGG" id="ecs:ECs_3668"/>
<dbReference type="PATRIC" id="fig|386585.9.peg.3834"/>
<dbReference type="eggNOG" id="COG0583">
    <property type="taxonomic scope" value="Bacteria"/>
</dbReference>
<dbReference type="HOGENOM" id="CLU_039613_37_1_6"/>
<dbReference type="OMA" id="PDWAMWL"/>
<dbReference type="Proteomes" id="UP000000558">
    <property type="component" value="Chromosome"/>
</dbReference>
<dbReference type="Proteomes" id="UP000002519">
    <property type="component" value="Chromosome"/>
</dbReference>
<dbReference type="GO" id="GO:0005737">
    <property type="term" value="C:cytoplasm"/>
    <property type="evidence" value="ECO:0007669"/>
    <property type="project" value="UniProtKB-SubCell"/>
</dbReference>
<dbReference type="GO" id="GO:0003700">
    <property type="term" value="F:DNA-binding transcription factor activity"/>
    <property type="evidence" value="ECO:0007669"/>
    <property type="project" value="InterPro"/>
</dbReference>
<dbReference type="GO" id="GO:0043565">
    <property type="term" value="F:sequence-specific DNA binding"/>
    <property type="evidence" value="ECO:0007669"/>
    <property type="project" value="TreeGrafter"/>
</dbReference>
<dbReference type="GO" id="GO:0006351">
    <property type="term" value="P:DNA-templated transcription"/>
    <property type="evidence" value="ECO:0007669"/>
    <property type="project" value="TreeGrafter"/>
</dbReference>
<dbReference type="CDD" id="cd08432">
    <property type="entry name" value="PBP2_GcdR_TrpI_HvrB_AmpR_like"/>
    <property type="match status" value="1"/>
</dbReference>
<dbReference type="FunFam" id="1.10.10.10:FF:000038">
    <property type="entry name" value="Glycine cleavage system transcriptional activator"/>
    <property type="match status" value="1"/>
</dbReference>
<dbReference type="FunFam" id="3.40.190.10:FF:000017">
    <property type="entry name" value="Glycine cleavage system transcriptional activator"/>
    <property type="match status" value="1"/>
</dbReference>
<dbReference type="Gene3D" id="3.40.190.10">
    <property type="entry name" value="Periplasmic binding protein-like II"/>
    <property type="match status" value="2"/>
</dbReference>
<dbReference type="Gene3D" id="1.10.10.10">
    <property type="entry name" value="Winged helix-like DNA-binding domain superfamily/Winged helix DNA-binding domain"/>
    <property type="match status" value="1"/>
</dbReference>
<dbReference type="InterPro" id="IPR005119">
    <property type="entry name" value="LysR_subst-bd"/>
</dbReference>
<dbReference type="InterPro" id="IPR000847">
    <property type="entry name" value="Tscrpt_reg_HTH_LysR"/>
</dbReference>
<dbReference type="InterPro" id="IPR036388">
    <property type="entry name" value="WH-like_DNA-bd_sf"/>
</dbReference>
<dbReference type="InterPro" id="IPR036390">
    <property type="entry name" value="WH_DNA-bd_sf"/>
</dbReference>
<dbReference type="NCBIfam" id="NF008352">
    <property type="entry name" value="PRK11139.1"/>
    <property type="match status" value="1"/>
</dbReference>
<dbReference type="PANTHER" id="PTHR30537:SF26">
    <property type="entry name" value="GLYCINE CLEAVAGE SYSTEM TRANSCRIPTIONAL ACTIVATOR"/>
    <property type="match status" value="1"/>
</dbReference>
<dbReference type="PANTHER" id="PTHR30537">
    <property type="entry name" value="HTH-TYPE TRANSCRIPTIONAL REGULATOR"/>
    <property type="match status" value="1"/>
</dbReference>
<dbReference type="Pfam" id="PF00126">
    <property type="entry name" value="HTH_1"/>
    <property type="match status" value="1"/>
</dbReference>
<dbReference type="Pfam" id="PF03466">
    <property type="entry name" value="LysR_substrate"/>
    <property type="match status" value="1"/>
</dbReference>
<dbReference type="PRINTS" id="PR00039">
    <property type="entry name" value="HTHLYSR"/>
</dbReference>
<dbReference type="SUPFAM" id="SSF53850">
    <property type="entry name" value="Periplasmic binding protein-like II"/>
    <property type="match status" value="1"/>
</dbReference>
<dbReference type="SUPFAM" id="SSF46785">
    <property type="entry name" value="Winged helix' DNA-binding domain"/>
    <property type="match status" value="1"/>
</dbReference>
<dbReference type="PROSITE" id="PS50931">
    <property type="entry name" value="HTH_LYSR"/>
    <property type="match status" value="1"/>
</dbReference>
<gene>
    <name type="primary">gcvA</name>
    <name type="ordered locus">Z4125</name>
    <name type="ordered locus">ECs3668</name>
</gene>
<sequence length="305" mass="34402">MSKRLPPLNALRVFDAAARHLSFTRAAEELFVTQAAVSHQIKSLEDFLGLKLFRRRNRSLLLTEEGQSYFLDIKEIFSQLTEATRKLQARSAKGALTVSLLPSFAIHWLVPRLSSFNSAYPGIDVRIQAVDRQEDKLADDVDVAIFYGRGNWPGLRVEKLYAEYLLPVCSPLLLTGEKPLKTPEDLAKHTLLHDASRRDWQTYTRQLGLNHINVQQGPIFSHSAMVLQAAIHGQGVALANNVMAQSEIEAGRLVCPFNDVLVSKNAFYLVCHDSQAELGKIAAFRQWILAKAAAEQEKFRFRYEQ</sequence>
<organism>
    <name type="scientific">Escherichia coli O157:H7</name>
    <dbReference type="NCBI Taxonomy" id="83334"/>
    <lineage>
        <taxon>Bacteria</taxon>
        <taxon>Pseudomonadati</taxon>
        <taxon>Pseudomonadota</taxon>
        <taxon>Gammaproteobacteria</taxon>
        <taxon>Enterobacterales</taxon>
        <taxon>Enterobacteriaceae</taxon>
        <taxon>Escherichia</taxon>
    </lineage>
</organism>
<name>GCVA_ECO57</name>
<feature type="chain" id="PRO_0000105626" description="Glycine cleavage system transcriptional activator">
    <location>
        <begin position="1"/>
        <end position="305"/>
    </location>
</feature>
<feature type="domain" description="HTH lysR-type" evidence="2">
    <location>
        <begin position="6"/>
        <end position="63"/>
    </location>
</feature>
<feature type="DNA-binding region" description="H-T-H motif" evidence="2">
    <location>
        <begin position="23"/>
        <end position="42"/>
    </location>
</feature>
<proteinExistence type="inferred from homology"/>
<reference key="1">
    <citation type="journal article" date="2001" name="Nature">
        <title>Genome sequence of enterohaemorrhagic Escherichia coli O157:H7.</title>
        <authorList>
            <person name="Perna N.T."/>
            <person name="Plunkett G. III"/>
            <person name="Burland V."/>
            <person name="Mau B."/>
            <person name="Glasner J.D."/>
            <person name="Rose D.J."/>
            <person name="Mayhew G.F."/>
            <person name="Evans P.S."/>
            <person name="Gregor J."/>
            <person name="Kirkpatrick H.A."/>
            <person name="Posfai G."/>
            <person name="Hackett J."/>
            <person name="Klink S."/>
            <person name="Boutin A."/>
            <person name="Shao Y."/>
            <person name="Miller L."/>
            <person name="Grotbeck E.J."/>
            <person name="Davis N.W."/>
            <person name="Lim A."/>
            <person name="Dimalanta E.T."/>
            <person name="Potamousis K."/>
            <person name="Apodaca J."/>
            <person name="Anantharaman T.S."/>
            <person name="Lin J."/>
            <person name="Yen G."/>
            <person name="Schwartz D.C."/>
            <person name="Welch R.A."/>
            <person name="Blattner F.R."/>
        </authorList>
    </citation>
    <scope>NUCLEOTIDE SEQUENCE [LARGE SCALE GENOMIC DNA]</scope>
    <source>
        <strain>O157:H7 / EDL933 / ATCC 700927 / EHEC</strain>
    </source>
</reference>
<reference key="2">
    <citation type="journal article" date="2001" name="DNA Res.">
        <title>Complete genome sequence of enterohemorrhagic Escherichia coli O157:H7 and genomic comparison with a laboratory strain K-12.</title>
        <authorList>
            <person name="Hayashi T."/>
            <person name="Makino K."/>
            <person name="Ohnishi M."/>
            <person name="Kurokawa K."/>
            <person name="Ishii K."/>
            <person name="Yokoyama K."/>
            <person name="Han C.-G."/>
            <person name="Ohtsubo E."/>
            <person name="Nakayama K."/>
            <person name="Murata T."/>
            <person name="Tanaka M."/>
            <person name="Tobe T."/>
            <person name="Iida T."/>
            <person name="Takami H."/>
            <person name="Honda T."/>
            <person name="Sasakawa C."/>
            <person name="Ogasawara N."/>
            <person name="Yasunaga T."/>
            <person name="Kuhara S."/>
            <person name="Shiba T."/>
            <person name="Hattori M."/>
            <person name="Shinagawa H."/>
        </authorList>
    </citation>
    <scope>NUCLEOTIDE SEQUENCE [LARGE SCALE GENOMIC DNA]</scope>
    <source>
        <strain>O157:H7 / Sakai / RIMD 0509952 / EHEC</strain>
    </source>
</reference>
<accession>P0A9F8</accession>
<accession>P32064</accession>
<protein>
    <recommendedName>
        <fullName>Glycine cleavage system transcriptional activator</fullName>
    </recommendedName>
    <alternativeName>
        <fullName>Gcv operon activator</fullName>
    </alternativeName>
</protein>
<evidence type="ECO:0000250" key="1"/>
<evidence type="ECO:0000255" key="2">
    <source>
        <dbReference type="PROSITE-ProRule" id="PRU00253"/>
    </source>
</evidence>
<evidence type="ECO:0000305" key="3"/>
<comment type="function">
    <text evidence="1">Regulatory protein for the glycine cleavage system operon (gcv). Mediates activation of gcv by glycine and repression by purines. GcvA is negatively autoregulated. Binds to three sites upstream of the gcv promoter (By similarity).</text>
</comment>
<comment type="subcellular location">
    <subcellularLocation>
        <location evidence="3">Cytoplasm</location>
    </subcellularLocation>
</comment>
<comment type="similarity">
    <text evidence="3">Belongs to the LysR transcriptional regulatory family.</text>
</comment>